<accession>A9KEY5</accession>
<dbReference type="EC" id="1.1.1.290" evidence="1"/>
<dbReference type="EMBL" id="CP000733">
    <property type="protein sequence ID" value="ABS78316.2"/>
    <property type="status" value="ALT_INIT"/>
    <property type="molecule type" value="Genomic_DNA"/>
</dbReference>
<dbReference type="SMR" id="A9KEY5"/>
<dbReference type="KEGG" id="cbd:CBUD_0041"/>
<dbReference type="HOGENOM" id="CLU_019796_4_0_6"/>
<dbReference type="UniPathway" id="UPA00244">
    <property type="reaction ID" value="UER00310"/>
</dbReference>
<dbReference type="Proteomes" id="UP000008555">
    <property type="component" value="Chromosome"/>
</dbReference>
<dbReference type="GO" id="GO:0005829">
    <property type="term" value="C:cytosol"/>
    <property type="evidence" value="ECO:0007669"/>
    <property type="project" value="TreeGrafter"/>
</dbReference>
<dbReference type="GO" id="GO:0033711">
    <property type="term" value="F:4-phosphoerythronate dehydrogenase activity"/>
    <property type="evidence" value="ECO:0007669"/>
    <property type="project" value="UniProtKB-EC"/>
</dbReference>
<dbReference type="GO" id="GO:0030267">
    <property type="term" value="F:glyoxylate reductase (NADPH) activity"/>
    <property type="evidence" value="ECO:0007669"/>
    <property type="project" value="TreeGrafter"/>
</dbReference>
<dbReference type="GO" id="GO:0016618">
    <property type="term" value="F:hydroxypyruvate reductase [NAD(P)H] activity"/>
    <property type="evidence" value="ECO:0007669"/>
    <property type="project" value="TreeGrafter"/>
</dbReference>
<dbReference type="GO" id="GO:0051287">
    <property type="term" value="F:NAD binding"/>
    <property type="evidence" value="ECO:0007669"/>
    <property type="project" value="InterPro"/>
</dbReference>
<dbReference type="GO" id="GO:0046983">
    <property type="term" value="F:protein dimerization activity"/>
    <property type="evidence" value="ECO:0007669"/>
    <property type="project" value="InterPro"/>
</dbReference>
<dbReference type="GO" id="GO:0008615">
    <property type="term" value="P:pyridoxine biosynthetic process"/>
    <property type="evidence" value="ECO:0007669"/>
    <property type="project" value="UniProtKB-UniRule"/>
</dbReference>
<dbReference type="CDD" id="cd12158">
    <property type="entry name" value="ErythrP_dh"/>
    <property type="match status" value="1"/>
</dbReference>
<dbReference type="Gene3D" id="3.30.1370.170">
    <property type="match status" value="1"/>
</dbReference>
<dbReference type="Gene3D" id="3.40.50.720">
    <property type="entry name" value="NAD(P)-binding Rossmann-like Domain"/>
    <property type="match status" value="2"/>
</dbReference>
<dbReference type="HAMAP" id="MF_01825">
    <property type="entry name" value="PdxB"/>
    <property type="match status" value="1"/>
</dbReference>
<dbReference type="InterPro" id="IPR050223">
    <property type="entry name" value="D-isomer_2-hydroxyacid_DH"/>
</dbReference>
<dbReference type="InterPro" id="IPR006139">
    <property type="entry name" value="D-isomer_2_OHA_DH_cat_dom"/>
</dbReference>
<dbReference type="InterPro" id="IPR029753">
    <property type="entry name" value="D-isomer_DH_CS"/>
</dbReference>
<dbReference type="InterPro" id="IPR006140">
    <property type="entry name" value="D-isomer_DH_NAD-bd"/>
</dbReference>
<dbReference type="InterPro" id="IPR020921">
    <property type="entry name" value="Erythronate-4-P_DHase"/>
</dbReference>
<dbReference type="InterPro" id="IPR024531">
    <property type="entry name" value="Erythronate-4-P_DHase_dimer"/>
</dbReference>
<dbReference type="InterPro" id="IPR036291">
    <property type="entry name" value="NAD(P)-bd_dom_sf"/>
</dbReference>
<dbReference type="InterPro" id="IPR038251">
    <property type="entry name" value="PdxB_dimer_sf"/>
</dbReference>
<dbReference type="PANTHER" id="PTHR10996:SF178">
    <property type="entry name" value="2-HYDROXYACID DEHYDROGENASE YGL185C-RELATED"/>
    <property type="match status" value="1"/>
</dbReference>
<dbReference type="PANTHER" id="PTHR10996">
    <property type="entry name" value="2-HYDROXYACID DEHYDROGENASE-RELATED"/>
    <property type="match status" value="1"/>
</dbReference>
<dbReference type="Pfam" id="PF00389">
    <property type="entry name" value="2-Hacid_dh"/>
    <property type="match status" value="1"/>
</dbReference>
<dbReference type="Pfam" id="PF02826">
    <property type="entry name" value="2-Hacid_dh_C"/>
    <property type="match status" value="1"/>
</dbReference>
<dbReference type="Pfam" id="PF11890">
    <property type="entry name" value="DUF3410"/>
    <property type="match status" value="1"/>
</dbReference>
<dbReference type="SUPFAM" id="SSF52283">
    <property type="entry name" value="Formate/glycerate dehydrogenase catalytic domain-like"/>
    <property type="match status" value="1"/>
</dbReference>
<dbReference type="SUPFAM" id="SSF51735">
    <property type="entry name" value="NAD(P)-binding Rossmann-fold domains"/>
    <property type="match status" value="1"/>
</dbReference>
<dbReference type="PROSITE" id="PS00671">
    <property type="entry name" value="D_2_HYDROXYACID_DH_3"/>
    <property type="match status" value="1"/>
</dbReference>
<evidence type="ECO:0000255" key="1">
    <source>
        <dbReference type="HAMAP-Rule" id="MF_01825"/>
    </source>
</evidence>
<evidence type="ECO:0000305" key="2"/>
<keyword id="KW-0963">Cytoplasm</keyword>
<keyword id="KW-0520">NAD</keyword>
<keyword id="KW-0560">Oxidoreductase</keyword>
<keyword id="KW-0664">Pyridoxine biosynthesis</keyword>
<name>PDXB_COXBN</name>
<proteinExistence type="inferred from homology"/>
<reference key="1">
    <citation type="journal article" date="2009" name="Infect. Immun.">
        <title>Comparative genomics reveal extensive transposon-mediated genomic plasticity and diversity among potential effector proteins within the genus Coxiella.</title>
        <authorList>
            <person name="Beare P.A."/>
            <person name="Unsworth N."/>
            <person name="Andoh M."/>
            <person name="Voth D.E."/>
            <person name="Omsland A."/>
            <person name="Gilk S.D."/>
            <person name="Williams K.P."/>
            <person name="Sobral B.W."/>
            <person name="Kupko J.J. III"/>
            <person name="Porcella S.F."/>
            <person name="Samuel J.E."/>
            <person name="Heinzen R.A."/>
        </authorList>
    </citation>
    <scope>NUCLEOTIDE SEQUENCE [LARGE SCALE GENOMIC DNA]</scope>
    <source>
        <strain>Dugway 5J108-111</strain>
    </source>
</reference>
<comment type="function">
    <text evidence="1">Catalyzes the oxidation of erythronate-4-phosphate to 3-hydroxy-2-oxo-4-phosphonooxybutanoate.</text>
</comment>
<comment type="catalytic activity">
    <reaction evidence="1">
        <text>4-phospho-D-erythronate + NAD(+) = (R)-3-hydroxy-2-oxo-4-phosphooxybutanoate + NADH + H(+)</text>
        <dbReference type="Rhea" id="RHEA:18829"/>
        <dbReference type="ChEBI" id="CHEBI:15378"/>
        <dbReference type="ChEBI" id="CHEBI:57540"/>
        <dbReference type="ChEBI" id="CHEBI:57945"/>
        <dbReference type="ChEBI" id="CHEBI:58538"/>
        <dbReference type="ChEBI" id="CHEBI:58766"/>
        <dbReference type="EC" id="1.1.1.290"/>
    </reaction>
</comment>
<comment type="pathway">
    <text evidence="1">Cofactor biosynthesis; pyridoxine 5'-phosphate biosynthesis; pyridoxine 5'-phosphate from D-erythrose 4-phosphate: step 2/5.</text>
</comment>
<comment type="subunit">
    <text evidence="1">Homodimer.</text>
</comment>
<comment type="subcellular location">
    <subcellularLocation>
        <location evidence="1">Cytoplasm</location>
    </subcellularLocation>
</comment>
<comment type="similarity">
    <text evidence="1">Belongs to the D-isomer specific 2-hydroxyacid dehydrogenase family. PdxB subfamily.</text>
</comment>
<comment type="sequence caution" evidence="2">
    <conflict type="erroneous initiation">
        <sequence resource="EMBL-CDS" id="ABS78316"/>
    </conflict>
</comment>
<sequence length="366" mass="40929">MIKILADDRIPFVSELFGDFGELILKPGAHIQNRDLLAVNALLTRSITSVDSALLEGTAVEFVGSATAGFDHIDSTWLKKQSIHWAYAPGANATAVAEYVLHCVAYLHKKNLLPRKSATAAIIGVGHVGCVVSDRLRKIGFTVFHNDPPRAQLEKDFISVPLASLANVDLVCLHTPLVKTGNFPTYHLIDNRFLKMLKPGSVLLNAGRGAVIDNNALLQCDHVITCLDVWENESTVNLQLLEKTTIATPHIAGYSKQAKLRATLMIYDAFLKYFHLSDTRRFSELQQLQETMTLNIQDGRNAEDILLTLFDPGRESQRMREALAENPDQFEYLRRHFPLRNEFSAIQLTPTPSALLRKELDDWGFK</sequence>
<organism>
    <name type="scientific">Coxiella burnetii (strain Dugway 5J108-111)</name>
    <dbReference type="NCBI Taxonomy" id="434922"/>
    <lineage>
        <taxon>Bacteria</taxon>
        <taxon>Pseudomonadati</taxon>
        <taxon>Pseudomonadota</taxon>
        <taxon>Gammaproteobacteria</taxon>
        <taxon>Legionellales</taxon>
        <taxon>Coxiellaceae</taxon>
        <taxon>Coxiella</taxon>
    </lineage>
</organism>
<feature type="chain" id="PRO_1000088415" description="Erythronate-4-phosphate dehydrogenase">
    <location>
        <begin position="1"/>
        <end position="366"/>
    </location>
</feature>
<feature type="active site" evidence="1">
    <location>
        <position position="208"/>
    </location>
</feature>
<feature type="active site" evidence="1">
    <location>
        <position position="233"/>
    </location>
</feature>
<feature type="active site" description="Proton donor" evidence="1">
    <location>
        <position position="250"/>
    </location>
</feature>
<feature type="binding site" evidence="1">
    <location>
        <position position="46"/>
    </location>
    <ligand>
        <name>substrate</name>
    </ligand>
</feature>
<feature type="binding site" evidence="1">
    <location>
        <position position="67"/>
    </location>
    <ligand>
        <name>substrate</name>
    </ligand>
</feature>
<feature type="binding site" evidence="1">
    <location>
        <position position="147"/>
    </location>
    <ligand>
        <name>NAD(+)</name>
        <dbReference type="ChEBI" id="CHEBI:57540"/>
    </ligand>
</feature>
<feature type="binding site" evidence="1">
    <location>
        <position position="175"/>
    </location>
    <ligand>
        <name>NAD(+)</name>
        <dbReference type="ChEBI" id="CHEBI:57540"/>
    </ligand>
</feature>
<feature type="binding site" evidence="1">
    <location>
        <position position="228"/>
    </location>
    <ligand>
        <name>NAD(+)</name>
        <dbReference type="ChEBI" id="CHEBI:57540"/>
    </ligand>
</feature>
<feature type="binding site" evidence="1">
    <location>
        <position position="253"/>
    </location>
    <ligand>
        <name>NAD(+)</name>
        <dbReference type="ChEBI" id="CHEBI:57540"/>
    </ligand>
</feature>
<feature type="binding site" evidence="1">
    <location>
        <position position="254"/>
    </location>
    <ligand>
        <name>substrate</name>
    </ligand>
</feature>
<gene>
    <name evidence="1" type="primary">pdxB</name>
    <name type="ordered locus">CBUD_0041</name>
</gene>
<protein>
    <recommendedName>
        <fullName evidence="1">Erythronate-4-phosphate dehydrogenase</fullName>
        <ecNumber evidence="1">1.1.1.290</ecNumber>
    </recommendedName>
</protein>